<gene>
    <name evidence="1" type="primary">prfA</name>
    <name type="ordered locus">MW2042</name>
</gene>
<name>RF1_STAAW</name>
<comment type="function">
    <text evidence="1">Peptide chain release factor 1 directs the termination of translation in response to the peptide chain termination codons UAG and UAA.</text>
</comment>
<comment type="subcellular location">
    <subcellularLocation>
        <location evidence="1">Cytoplasm</location>
    </subcellularLocation>
</comment>
<comment type="PTM">
    <text evidence="1">Methylated by PrmC. Methylation increases the termination efficiency of RF1.</text>
</comment>
<comment type="similarity">
    <text evidence="1">Belongs to the prokaryotic/mitochondrial release factor family.</text>
</comment>
<protein>
    <recommendedName>
        <fullName evidence="1">Peptide chain release factor 1</fullName>
        <shortName evidence="1">RF-1</shortName>
    </recommendedName>
</protein>
<sequence length="358" mass="40350">MFDQLDIVEERYEQLNELLSDPDVVNDSDKLRKYSKEQADLQKTVDVYRNYKAKKEELADIEEMLSETDDKEEVEMLKEESNGIKAELPNLEEELKILLIPKDPNDDKDVIVEIRAAAGGDEAAIFAGDLMRMYSKYAESQGFKTEIVEASESDHGGYKEISFSVSGNGAYSKLKFENGAHRVQRVPETESGGRIHTSTATVAVLPEVEDVEIEIRNEDLKIDTYRSSGAGGQHVNTTDSAVRITHLPTGVIATSSEKSQIQNREKAMKVLKARLYDMKVQEEQQKYASQRKSAVGTGDRSERIRTYNYPQSRVTDHRIGLTLQKLGQIMEGHLEEIIDALTLSEQTDKLKELNNGEL</sequence>
<proteinExistence type="inferred from homology"/>
<accession>P66020</accession>
<accession>Q99SE0</accession>
<dbReference type="EMBL" id="BA000033">
    <property type="protein sequence ID" value="BAB95907.1"/>
    <property type="molecule type" value="Genomic_DNA"/>
</dbReference>
<dbReference type="RefSeq" id="WP_000460242.1">
    <property type="nucleotide sequence ID" value="NC_003923.1"/>
</dbReference>
<dbReference type="SMR" id="P66020"/>
<dbReference type="KEGG" id="sam:MW2042"/>
<dbReference type="HOGENOM" id="CLU_036856_0_1_9"/>
<dbReference type="GO" id="GO:0005737">
    <property type="term" value="C:cytoplasm"/>
    <property type="evidence" value="ECO:0007669"/>
    <property type="project" value="UniProtKB-SubCell"/>
</dbReference>
<dbReference type="GO" id="GO:0016149">
    <property type="term" value="F:translation release factor activity, codon specific"/>
    <property type="evidence" value="ECO:0007669"/>
    <property type="project" value="UniProtKB-UniRule"/>
</dbReference>
<dbReference type="FunFam" id="3.30.160.20:FF:000004">
    <property type="entry name" value="Peptide chain release factor 1"/>
    <property type="match status" value="1"/>
</dbReference>
<dbReference type="FunFam" id="3.30.70.1660:FF:000002">
    <property type="entry name" value="Peptide chain release factor 1"/>
    <property type="match status" value="1"/>
</dbReference>
<dbReference type="FunFam" id="3.30.70.1660:FF:000004">
    <property type="entry name" value="Peptide chain release factor 1"/>
    <property type="match status" value="1"/>
</dbReference>
<dbReference type="Gene3D" id="3.30.160.20">
    <property type="match status" value="1"/>
</dbReference>
<dbReference type="Gene3D" id="3.30.70.1660">
    <property type="match status" value="1"/>
</dbReference>
<dbReference type="Gene3D" id="6.10.140.1950">
    <property type="match status" value="1"/>
</dbReference>
<dbReference type="HAMAP" id="MF_00093">
    <property type="entry name" value="Rel_fac_1"/>
    <property type="match status" value="1"/>
</dbReference>
<dbReference type="InterPro" id="IPR005139">
    <property type="entry name" value="PCRF"/>
</dbReference>
<dbReference type="InterPro" id="IPR000352">
    <property type="entry name" value="Pep_chain_release_fac_I"/>
</dbReference>
<dbReference type="InterPro" id="IPR045853">
    <property type="entry name" value="Pep_chain_release_fac_I_sf"/>
</dbReference>
<dbReference type="InterPro" id="IPR050057">
    <property type="entry name" value="Prokaryotic/Mito_RF"/>
</dbReference>
<dbReference type="InterPro" id="IPR004373">
    <property type="entry name" value="RF-1"/>
</dbReference>
<dbReference type="NCBIfam" id="TIGR00019">
    <property type="entry name" value="prfA"/>
    <property type="match status" value="1"/>
</dbReference>
<dbReference type="NCBIfam" id="NF001859">
    <property type="entry name" value="PRK00591.1"/>
    <property type="match status" value="1"/>
</dbReference>
<dbReference type="PANTHER" id="PTHR43804">
    <property type="entry name" value="LD18447P"/>
    <property type="match status" value="1"/>
</dbReference>
<dbReference type="PANTHER" id="PTHR43804:SF7">
    <property type="entry name" value="LD18447P"/>
    <property type="match status" value="1"/>
</dbReference>
<dbReference type="Pfam" id="PF03462">
    <property type="entry name" value="PCRF"/>
    <property type="match status" value="1"/>
</dbReference>
<dbReference type="Pfam" id="PF00472">
    <property type="entry name" value="RF-1"/>
    <property type="match status" value="1"/>
</dbReference>
<dbReference type="SMART" id="SM00937">
    <property type="entry name" value="PCRF"/>
    <property type="match status" value="1"/>
</dbReference>
<dbReference type="SUPFAM" id="SSF75620">
    <property type="entry name" value="Release factor"/>
    <property type="match status" value="1"/>
</dbReference>
<dbReference type="PROSITE" id="PS00745">
    <property type="entry name" value="RF_PROK_I"/>
    <property type="match status" value="1"/>
</dbReference>
<keyword id="KW-0963">Cytoplasm</keyword>
<keyword id="KW-0488">Methylation</keyword>
<keyword id="KW-0648">Protein biosynthesis</keyword>
<reference key="1">
    <citation type="journal article" date="2002" name="Lancet">
        <title>Genome and virulence determinants of high virulence community-acquired MRSA.</title>
        <authorList>
            <person name="Baba T."/>
            <person name="Takeuchi F."/>
            <person name="Kuroda M."/>
            <person name="Yuzawa H."/>
            <person name="Aoki K."/>
            <person name="Oguchi A."/>
            <person name="Nagai Y."/>
            <person name="Iwama N."/>
            <person name="Asano K."/>
            <person name="Naimi T."/>
            <person name="Kuroda H."/>
            <person name="Cui L."/>
            <person name="Yamamoto K."/>
            <person name="Hiramatsu K."/>
        </authorList>
    </citation>
    <scope>NUCLEOTIDE SEQUENCE [LARGE SCALE GENOMIC DNA]</scope>
    <source>
        <strain>MW2</strain>
    </source>
</reference>
<organism>
    <name type="scientific">Staphylococcus aureus (strain MW2)</name>
    <dbReference type="NCBI Taxonomy" id="196620"/>
    <lineage>
        <taxon>Bacteria</taxon>
        <taxon>Bacillati</taxon>
        <taxon>Bacillota</taxon>
        <taxon>Bacilli</taxon>
        <taxon>Bacillales</taxon>
        <taxon>Staphylococcaceae</taxon>
        <taxon>Staphylococcus</taxon>
    </lineage>
</organism>
<evidence type="ECO:0000255" key="1">
    <source>
        <dbReference type="HAMAP-Rule" id="MF_00093"/>
    </source>
</evidence>
<feature type="chain" id="PRO_0000177742" description="Peptide chain release factor 1">
    <location>
        <begin position="1"/>
        <end position="358"/>
    </location>
</feature>
<feature type="modified residue" description="N5-methylglutamine" evidence="1">
    <location>
        <position position="233"/>
    </location>
</feature>